<reference key="1">
    <citation type="journal article" date="2002" name="Proc. Natl. Acad. Sci. U.S.A.">
        <title>The Brucella suis genome reveals fundamental similarities between animal and plant pathogens and symbionts.</title>
        <authorList>
            <person name="Paulsen I.T."/>
            <person name="Seshadri R."/>
            <person name="Nelson K.E."/>
            <person name="Eisen J.A."/>
            <person name="Heidelberg J.F."/>
            <person name="Read T.D."/>
            <person name="Dodson R.J."/>
            <person name="Umayam L.A."/>
            <person name="Brinkac L.M."/>
            <person name="Beanan M.J."/>
            <person name="Daugherty S.C."/>
            <person name="DeBoy R.T."/>
            <person name="Durkin A.S."/>
            <person name="Kolonay J.F."/>
            <person name="Madupu R."/>
            <person name="Nelson W.C."/>
            <person name="Ayodeji B."/>
            <person name="Kraul M."/>
            <person name="Shetty J."/>
            <person name="Malek J.A."/>
            <person name="Van Aken S.E."/>
            <person name="Riedmuller S."/>
            <person name="Tettelin H."/>
            <person name="Gill S.R."/>
            <person name="White O."/>
            <person name="Salzberg S.L."/>
            <person name="Hoover D.L."/>
            <person name="Lindler L.E."/>
            <person name="Halling S.M."/>
            <person name="Boyle S.M."/>
            <person name="Fraser C.M."/>
        </authorList>
    </citation>
    <scope>NUCLEOTIDE SEQUENCE [LARGE SCALE GENOMIC DNA]</scope>
    <source>
        <strain>1330</strain>
    </source>
</reference>
<reference key="2">
    <citation type="journal article" date="2011" name="J. Bacteriol.">
        <title>Revised genome sequence of Brucella suis 1330.</title>
        <authorList>
            <person name="Tae H."/>
            <person name="Shallom S."/>
            <person name="Settlage R."/>
            <person name="Preston D."/>
            <person name="Adams L.G."/>
            <person name="Garner H.R."/>
        </authorList>
    </citation>
    <scope>NUCLEOTIDE SEQUENCE [LARGE SCALE GENOMIC DNA]</scope>
    <source>
        <strain>1330</strain>
    </source>
</reference>
<organism>
    <name type="scientific">Brucella suis biovar 1 (strain 1330)</name>
    <dbReference type="NCBI Taxonomy" id="204722"/>
    <lineage>
        <taxon>Bacteria</taxon>
        <taxon>Pseudomonadati</taxon>
        <taxon>Pseudomonadota</taxon>
        <taxon>Alphaproteobacteria</taxon>
        <taxon>Hyphomicrobiales</taxon>
        <taxon>Brucellaceae</taxon>
        <taxon>Brucella/Ochrobactrum group</taxon>
        <taxon>Brucella</taxon>
    </lineage>
</organism>
<keyword id="KW-0963">Cytoplasm</keyword>
<keyword id="KW-0489">Methyltransferase</keyword>
<keyword id="KW-0698">rRNA processing</keyword>
<keyword id="KW-0949">S-adenosyl-L-methionine</keyword>
<keyword id="KW-0808">Transferase</keyword>
<dbReference type="EC" id="2.1.1.166" evidence="1"/>
<dbReference type="EMBL" id="AE014292">
    <property type="protein sequence ID" value="AAN33873.1"/>
    <property type="status" value="ALT_INIT"/>
    <property type="molecule type" value="Genomic_DNA"/>
</dbReference>
<dbReference type="EMBL" id="CP002998">
    <property type="protein sequence ID" value="AEM20148.1"/>
    <property type="status" value="ALT_INIT"/>
    <property type="molecule type" value="Genomic_DNA"/>
</dbReference>
<dbReference type="RefSeq" id="WP_002965955.1">
    <property type="nucleotide sequence ID" value="NZ_KN046805.1"/>
</dbReference>
<dbReference type="SMR" id="Q8FVY1"/>
<dbReference type="KEGG" id="bms:BRA0686"/>
<dbReference type="KEGG" id="bsi:BS1330_II0679"/>
<dbReference type="PATRIC" id="fig|204722.21.peg.3421"/>
<dbReference type="HOGENOM" id="CLU_009422_4_0_5"/>
<dbReference type="PhylomeDB" id="Q8FVY1"/>
<dbReference type="Proteomes" id="UP000007104">
    <property type="component" value="Chromosome II"/>
</dbReference>
<dbReference type="GO" id="GO:0005737">
    <property type="term" value="C:cytoplasm"/>
    <property type="evidence" value="ECO:0007669"/>
    <property type="project" value="UniProtKB-SubCell"/>
</dbReference>
<dbReference type="GO" id="GO:0008650">
    <property type="term" value="F:rRNA (uridine-2'-O-)-methyltransferase activity"/>
    <property type="evidence" value="ECO:0007669"/>
    <property type="project" value="UniProtKB-UniRule"/>
</dbReference>
<dbReference type="Gene3D" id="3.40.50.150">
    <property type="entry name" value="Vaccinia Virus protein VP39"/>
    <property type="match status" value="1"/>
</dbReference>
<dbReference type="HAMAP" id="MF_01547">
    <property type="entry name" value="RNA_methyltr_E"/>
    <property type="match status" value="1"/>
</dbReference>
<dbReference type="InterPro" id="IPR050082">
    <property type="entry name" value="RNA_methyltr_RlmE"/>
</dbReference>
<dbReference type="InterPro" id="IPR002877">
    <property type="entry name" value="RNA_MeTrfase_FtsJ_dom"/>
</dbReference>
<dbReference type="InterPro" id="IPR015507">
    <property type="entry name" value="rRNA-MeTfrase_E"/>
</dbReference>
<dbReference type="InterPro" id="IPR029063">
    <property type="entry name" value="SAM-dependent_MTases_sf"/>
</dbReference>
<dbReference type="PANTHER" id="PTHR10920">
    <property type="entry name" value="RIBOSOMAL RNA METHYLTRANSFERASE"/>
    <property type="match status" value="1"/>
</dbReference>
<dbReference type="PANTHER" id="PTHR10920:SF18">
    <property type="entry name" value="RRNA METHYLTRANSFERASE 2, MITOCHONDRIAL"/>
    <property type="match status" value="1"/>
</dbReference>
<dbReference type="Pfam" id="PF01728">
    <property type="entry name" value="FtsJ"/>
    <property type="match status" value="1"/>
</dbReference>
<dbReference type="PIRSF" id="PIRSF005461">
    <property type="entry name" value="23S_rRNA_mtase"/>
    <property type="match status" value="1"/>
</dbReference>
<dbReference type="SUPFAM" id="SSF53335">
    <property type="entry name" value="S-adenosyl-L-methionine-dependent methyltransferases"/>
    <property type="match status" value="1"/>
</dbReference>
<accession>Q8FVY1</accession>
<accession>G0KD60</accession>
<name>RLME_BRUSU</name>
<protein>
    <recommendedName>
        <fullName evidence="1">Ribosomal RNA large subunit methyltransferase E</fullName>
        <ecNumber evidence="1">2.1.1.166</ecNumber>
    </recommendedName>
    <alternativeName>
        <fullName evidence="1">23S rRNA Um2552 methyltransferase</fullName>
    </alternativeName>
    <alternativeName>
        <fullName evidence="1">rRNA (uridine-2'-O-)-methyltransferase</fullName>
    </alternativeName>
</protein>
<feature type="chain" id="PRO_0000155480" description="Ribosomal RNA large subunit methyltransferase E">
    <location>
        <begin position="1"/>
        <end position="240"/>
    </location>
</feature>
<feature type="region of interest" description="Disordered" evidence="2">
    <location>
        <begin position="1"/>
        <end position="33"/>
    </location>
</feature>
<feature type="compositionally biased region" description="Gly residues" evidence="2">
    <location>
        <begin position="1"/>
        <end position="20"/>
    </location>
</feature>
<feature type="active site" description="Proton acceptor" evidence="1">
    <location>
        <position position="195"/>
    </location>
</feature>
<feature type="binding site" evidence="1">
    <location>
        <position position="92"/>
    </location>
    <ligand>
        <name>S-adenosyl-L-methionine</name>
        <dbReference type="ChEBI" id="CHEBI:59789"/>
    </ligand>
</feature>
<feature type="binding site" evidence="1">
    <location>
        <position position="94"/>
    </location>
    <ligand>
        <name>S-adenosyl-L-methionine</name>
        <dbReference type="ChEBI" id="CHEBI:59789"/>
    </ligand>
</feature>
<feature type="binding site" evidence="1">
    <location>
        <position position="115"/>
    </location>
    <ligand>
        <name>S-adenosyl-L-methionine</name>
        <dbReference type="ChEBI" id="CHEBI:59789"/>
    </ligand>
</feature>
<feature type="binding site" evidence="1">
    <location>
        <position position="131"/>
    </location>
    <ligand>
        <name>S-adenosyl-L-methionine</name>
        <dbReference type="ChEBI" id="CHEBI:59789"/>
    </ligand>
</feature>
<feature type="binding site" evidence="1">
    <location>
        <position position="155"/>
    </location>
    <ligand>
        <name>S-adenosyl-L-methionine</name>
        <dbReference type="ChEBI" id="CHEBI:59789"/>
    </ligand>
</feature>
<proteinExistence type="inferred from homology"/>
<comment type="function">
    <text evidence="1">Specifically methylates the uridine in position 2552 of 23S rRNA at the 2'-O position of the ribose in the fully assembled 50S ribosomal subunit.</text>
</comment>
<comment type="catalytic activity">
    <reaction evidence="1">
        <text>uridine(2552) in 23S rRNA + S-adenosyl-L-methionine = 2'-O-methyluridine(2552) in 23S rRNA + S-adenosyl-L-homocysteine + H(+)</text>
        <dbReference type="Rhea" id="RHEA:42720"/>
        <dbReference type="Rhea" id="RHEA-COMP:10202"/>
        <dbReference type="Rhea" id="RHEA-COMP:10203"/>
        <dbReference type="ChEBI" id="CHEBI:15378"/>
        <dbReference type="ChEBI" id="CHEBI:57856"/>
        <dbReference type="ChEBI" id="CHEBI:59789"/>
        <dbReference type="ChEBI" id="CHEBI:65315"/>
        <dbReference type="ChEBI" id="CHEBI:74478"/>
        <dbReference type="EC" id="2.1.1.166"/>
    </reaction>
</comment>
<comment type="subcellular location">
    <subcellularLocation>
        <location evidence="1">Cytoplasm</location>
    </subcellularLocation>
</comment>
<comment type="similarity">
    <text evidence="1">Belongs to the class I-like SAM-binding methyltransferase superfamily. RNA methyltransferase RlmE family.</text>
</comment>
<comment type="sequence caution" evidence="3">
    <conflict type="erroneous initiation">
        <sequence resource="EMBL-CDS" id="AAN33873"/>
    </conflict>
</comment>
<comment type="sequence caution" evidence="3">
    <conflict type="erroneous initiation">
        <sequence resource="EMBL-CDS" id="AEM20148"/>
    </conflict>
    <text>Truncated N-terminus.</text>
</comment>
<evidence type="ECO:0000255" key="1">
    <source>
        <dbReference type="HAMAP-Rule" id="MF_01547"/>
    </source>
</evidence>
<evidence type="ECO:0000256" key="2">
    <source>
        <dbReference type="SAM" id="MobiDB-lite"/>
    </source>
</evidence>
<evidence type="ECO:0000305" key="3"/>
<sequence>MSKAGGNKGGSRTGGRGGAGSSNLHVRVKKKAGTIKESSRRWLERHLNDPYVHKSRQDGYRSRAAYKLIEINDRYNLLKKGQKIIDLGAAPGGWSQIAARIVGSTDENPQVVGIDYLHVDPLPGVILLEMDFLDDEAPQKLMDALGDKPDLVISDMAAPTTGHRRTDHLRTVHLCEVAADFAVSVLKPGGHFLTKTFQGGTENELLALLKQKFRSVHHVKPPASRAESVELYLLARDFKG</sequence>
<gene>
    <name evidence="1" type="primary">rlmE</name>
    <name evidence="1" type="synonym">ftsJ</name>
    <name evidence="1" type="synonym">rrmJ</name>
    <name type="ordered locus">BRA0686</name>
    <name type="ordered locus">BS1330_II0679</name>
</gene>